<sequence length="89" mass="10253">MALLQQRKQEIISGYQTHETDTGSADVQVAMLTERINKLSTHLQANSKDHSSRRGLLQMIGRRKRLLAYILKHNPERYRALITRLGIRG</sequence>
<gene>
    <name evidence="1" type="primary">rpsO</name>
    <name evidence="1" type="synonym">rps15</name>
    <name type="ordered locus">Cyan7425_1606</name>
</gene>
<evidence type="ECO:0000255" key="1">
    <source>
        <dbReference type="HAMAP-Rule" id="MF_01343"/>
    </source>
</evidence>
<evidence type="ECO:0000305" key="2"/>
<comment type="function">
    <text evidence="1">One of the primary rRNA binding proteins, it binds directly to 16S rRNA where it helps nucleate assembly of the platform of the 30S subunit by binding and bridging several RNA helices of the 16S rRNA.</text>
</comment>
<comment type="function">
    <text evidence="1">Forms an intersubunit bridge (bridge B4) with the 23S rRNA of the 50S subunit in the ribosome.</text>
</comment>
<comment type="subunit">
    <text evidence="1">Part of the 30S ribosomal subunit. Forms a bridge to the 50S subunit in the 70S ribosome, contacting the 23S rRNA.</text>
</comment>
<comment type="similarity">
    <text evidence="1">Belongs to the universal ribosomal protein uS15 family.</text>
</comment>
<accession>B8HQI6</accession>
<dbReference type="EMBL" id="CP001344">
    <property type="protein sequence ID" value="ACL43976.1"/>
    <property type="molecule type" value="Genomic_DNA"/>
</dbReference>
<dbReference type="SMR" id="B8HQI6"/>
<dbReference type="STRING" id="395961.Cyan7425_1606"/>
<dbReference type="KEGG" id="cyn:Cyan7425_1606"/>
<dbReference type="eggNOG" id="COG0184">
    <property type="taxonomic scope" value="Bacteria"/>
</dbReference>
<dbReference type="HOGENOM" id="CLU_148518_0_0_3"/>
<dbReference type="OrthoDB" id="9799262at2"/>
<dbReference type="GO" id="GO:0022627">
    <property type="term" value="C:cytosolic small ribosomal subunit"/>
    <property type="evidence" value="ECO:0007669"/>
    <property type="project" value="TreeGrafter"/>
</dbReference>
<dbReference type="GO" id="GO:0019843">
    <property type="term" value="F:rRNA binding"/>
    <property type="evidence" value="ECO:0007669"/>
    <property type="project" value="UniProtKB-UniRule"/>
</dbReference>
<dbReference type="GO" id="GO:0003735">
    <property type="term" value="F:structural constituent of ribosome"/>
    <property type="evidence" value="ECO:0007669"/>
    <property type="project" value="InterPro"/>
</dbReference>
<dbReference type="GO" id="GO:0006412">
    <property type="term" value="P:translation"/>
    <property type="evidence" value="ECO:0007669"/>
    <property type="project" value="UniProtKB-UniRule"/>
</dbReference>
<dbReference type="CDD" id="cd00353">
    <property type="entry name" value="Ribosomal_S15p_S13e"/>
    <property type="match status" value="1"/>
</dbReference>
<dbReference type="FunFam" id="1.10.287.10:FF:000002">
    <property type="entry name" value="30S ribosomal protein S15"/>
    <property type="match status" value="1"/>
</dbReference>
<dbReference type="Gene3D" id="6.10.250.3130">
    <property type="match status" value="1"/>
</dbReference>
<dbReference type="Gene3D" id="1.10.287.10">
    <property type="entry name" value="S15/NS1, RNA-binding"/>
    <property type="match status" value="1"/>
</dbReference>
<dbReference type="HAMAP" id="MF_01343_B">
    <property type="entry name" value="Ribosomal_uS15_B"/>
    <property type="match status" value="1"/>
</dbReference>
<dbReference type="InterPro" id="IPR000589">
    <property type="entry name" value="Ribosomal_uS15"/>
</dbReference>
<dbReference type="InterPro" id="IPR005290">
    <property type="entry name" value="Ribosomal_uS15_bac-type"/>
</dbReference>
<dbReference type="InterPro" id="IPR009068">
    <property type="entry name" value="uS15_NS1_RNA-bd_sf"/>
</dbReference>
<dbReference type="NCBIfam" id="TIGR00952">
    <property type="entry name" value="S15_bact"/>
    <property type="match status" value="1"/>
</dbReference>
<dbReference type="PANTHER" id="PTHR23321">
    <property type="entry name" value="RIBOSOMAL PROTEIN S15, BACTERIAL AND ORGANELLAR"/>
    <property type="match status" value="1"/>
</dbReference>
<dbReference type="PANTHER" id="PTHR23321:SF26">
    <property type="entry name" value="SMALL RIBOSOMAL SUBUNIT PROTEIN US15M"/>
    <property type="match status" value="1"/>
</dbReference>
<dbReference type="Pfam" id="PF00312">
    <property type="entry name" value="Ribosomal_S15"/>
    <property type="match status" value="1"/>
</dbReference>
<dbReference type="SMART" id="SM01387">
    <property type="entry name" value="Ribosomal_S15"/>
    <property type="match status" value="1"/>
</dbReference>
<dbReference type="SUPFAM" id="SSF47060">
    <property type="entry name" value="S15/NS1 RNA-binding domain"/>
    <property type="match status" value="1"/>
</dbReference>
<keyword id="KW-0687">Ribonucleoprotein</keyword>
<keyword id="KW-0689">Ribosomal protein</keyword>
<keyword id="KW-0694">RNA-binding</keyword>
<keyword id="KW-0699">rRNA-binding</keyword>
<protein>
    <recommendedName>
        <fullName evidence="1">Small ribosomal subunit protein uS15</fullName>
    </recommendedName>
    <alternativeName>
        <fullName evidence="2">30S ribosomal protein S15</fullName>
    </alternativeName>
</protein>
<name>RS15_CYAP4</name>
<reference key="1">
    <citation type="journal article" date="2011" name="MBio">
        <title>Novel metabolic attributes of the genus Cyanothece, comprising a group of unicellular nitrogen-fixing Cyanobacteria.</title>
        <authorList>
            <person name="Bandyopadhyay A."/>
            <person name="Elvitigala T."/>
            <person name="Welsh E."/>
            <person name="Stockel J."/>
            <person name="Liberton M."/>
            <person name="Min H."/>
            <person name="Sherman L.A."/>
            <person name="Pakrasi H.B."/>
        </authorList>
    </citation>
    <scope>NUCLEOTIDE SEQUENCE [LARGE SCALE GENOMIC DNA]</scope>
    <source>
        <strain>PCC 7425 / ATCC 29141</strain>
    </source>
</reference>
<proteinExistence type="inferred from homology"/>
<feature type="chain" id="PRO_1000166416" description="Small ribosomal subunit protein uS15">
    <location>
        <begin position="1"/>
        <end position="89"/>
    </location>
</feature>
<organism>
    <name type="scientific">Cyanothece sp. (strain PCC 7425 / ATCC 29141)</name>
    <dbReference type="NCBI Taxonomy" id="395961"/>
    <lineage>
        <taxon>Bacteria</taxon>
        <taxon>Bacillati</taxon>
        <taxon>Cyanobacteriota</taxon>
        <taxon>Cyanophyceae</taxon>
        <taxon>Gomontiellales</taxon>
        <taxon>Cyanothecaceae</taxon>
        <taxon>Cyanothece</taxon>
    </lineage>
</organism>